<accession>P42628</accession>
<accession>Q2M997</accession>
<accession>Q6BF46</accession>
<sequence length="443" mass="48315">MEIASNKGVIADASTPAGRAGMSESEWREAIKFDSTDTGWVIMSIGMAIGAGIVFLPVQVGLMGLWVFLLSSVIGYPAMYLFQRLFINTLAESPECKDYPSVISGYLGKNWGILLGALYFVMLVIWMFVYSTAITNDSASYLHTFGVTEGLLSDSPFYGLVLICILVAISSRGEKLLFKISTGMVLTKLLVVAALGVSMVGMWHLYNVGSLPPLGLLVKNAIITLPFTLTSILFIQTLSPMVISYRSREKSIEVARHKALRAMNIAFGILFVTVFFYAVSFTLAMGHDEAVKAYEQNISALAIAAQFISGDGAAWVKVVSVILNIFAVMTAFFGVYLGFREATQGIVMNILRRKMPAEKINENLVQRGIMIFAILLAWSAIVLNAPVLSFTSICSPIFGMVGCLIPAWLVYKVPALHKYKGMSLYLIIVTGLLLCVSPFLAFS</sequence>
<protein>
    <recommendedName>
        <fullName>Probable serine transporter</fullName>
    </recommendedName>
</protein>
<organism>
    <name type="scientific">Escherichia coli (strain K12)</name>
    <dbReference type="NCBI Taxonomy" id="83333"/>
    <lineage>
        <taxon>Bacteria</taxon>
        <taxon>Pseudomonadati</taxon>
        <taxon>Pseudomonadota</taxon>
        <taxon>Gammaproteobacteria</taxon>
        <taxon>Enterobacterales</taxon>
        <taxon>Enterobacteriaceae</taxon>
        <taxon>Escherichia</taxon>
    </lineage>
</organism>
<comment type="function">
    <text evidence="1 5">Plays a role in L-cysteine detoxification (PubMed:27435271). May transport both D- and L-serine (By similarity).</text>
</comment>
<comment type="subcellular location">
    <subcellularLocation>
        <location evidence="3">Cell inner membrane</location>
        <topology>Multi-pass membrane protein</topology>
    </subcellularLocation>
</comment>
<comment type="induction">
    <text evidence="4">Transcription induced by L-cysteine (in vivo), under control of DecR. Member of the dlsT(yhaO)-yhaM operon.</text>
</comment>
<comment type="disruption phenotype">
    <text evidence="5">No change in sensitivity to excess L-cysteine. Cells produce about 15% of wild-type levels of hydrogen sulfide in the presence of excess cysteine.</text>
</comment>
<comment type="similarity">
    <text evidence="6">Belongs to the amino acid/polyamine transporter 2 family. SdaC/TdcC subfamily.</text>
</comment>
<comment type="sequence caution" evidence="6">
    <conflict type="frameshift">
        <sequence resource="EMBL-CDS" id="AAA57914"/>
    </conflict>
</comment>
<comment type="sequence caution" evidence="6">
    <conflict type="erroneous initiation">
        <sequence resource="EMBL-CDS" id="BAE77159"/>
    </conflict>
    <text>Truncated N-terminus.</text>
</comment>
<reference key="1">
    <citation type="journal article" date="1997" name="Science">
        <title>The complete genome sequence of Escherichia coli K-12.</title>
        <authorList>
            <person name="Blattner F.R."/>
            <person name="Plunkett G. III"/>
            <person name="Bloch C.A."/>
            <person name="Perna N.T."/>
            <person name="Burland V."/>
            <person name="Riley M."/>
            <person name="Collado-Vides J."/>
            <person name="Glasner J.D."/>
            <person name="Rode C.K."/>
            <person name="Mayhew G.F."/>
            <person name="Gregor J."/>
            <person name="Davis N.W."/>
            <person name="Kirkpatrick H.A."/>
            <person name="Goeden M.A."/>
            <person name="Rose D.J."/>
            <person name="Mau B."/>
            <person name="Shao Y."/>
        </authorList>
    </citation>
    <scope>NUCLEOTIDE SEQUENCE [LARGE SCALE GENOMIC DNA]</scope>
    <source>
        <strain>K12 / MG1655 / ATCC 47076</strain>
    </source>
</reference>
<reference key="2">
    <citation type="journal article" date="2006" name="Nucleic Acids Res.">
        <title>Escherichia coli K-12: a cooperatively developed annotation snapshot -- 2005.</title>
        <authorList>
            <person name="Riley M."/>
            <person name="Abe T."/>
            <person name="Arnaud M.B."/>
            <person name="Berlyn M.K.B."/>
            <person name="Blattner F.R."/>
            <person name="Chaudhuri R.R."/>
            <person name="Glasner J.D."/>
            <person name="Horiuchi T."/>
            <person name="Keseler I.M."/>
            <person name="Kosuge T."/>
            <person name="Mori H."/>
            <person name="Perna N.T."/>
            <person name="Plunkett G. III"/>
            <person name="Rudd K.E."/>
            <person name="Serres M.H."/>
            <person name="Thomas G.H."/>
            <person name="Thomson N.R."/>
            <person name="Wishart D."/>
            <person name="Wanner B.L."/>
        </authorList>
    </citation>
    <scope>SEQUENCE REVISION</scope>
</reference>
<reference key="3">
    <citation type="journal article" date="2006" name="Mol. Syst. Biol.">
        <title>Highly accurate genome sequences of Escherichia coli K-12 strains MG1655 and W3110.</title>
        <authorList>
            <person name="Hayashi K."/>
            <person name="Morooka N."/>
            <person name="Yamamoto Y."/>
            <person name="Fujita K."/>
            <person name="Isono K."/>
            <person name="Choi S."/>
            <person name="Ohtsubo E."/>
            <person name="Baba T."/>
            <person name="Wanner B.L."/>
            <person name="Mori H."/>
            <person name="Horiuchi T."/>
        </authorList>
    </citation>
    <scope>NUCLEOTIDE SEQUENCE [LARGE SCALE GENOMIC DNA]</scope>
    <source>
        <strain>K12 / W3110 / ATCC 27325 / DSM 5911</strain>
    </source>
</reference>
<reference key="4">
    <citation type="journal article" date="2005" name="Science">
        <title>Global topology analysis of the Escherichia coli inner membrane proteome.</title>
        <authorList>
            <person name="Daley D.O."/>
            <person name="Rapp M."/>
            <person name="Granseth E."/>
            <person name="Melen K."/>
            <person name="Drew D."/>
            <person name="von Heijne G."/>
        </authorList>
    </citation>
    <scope>SUBCELLULAR LOCATION</scope>
    <scope>TOPOLOGY [LARGE SCALE ANALYSIS]</scope>
    <source>
        <strain>K12 / MG1655 / ATCC 47076</strain>
    </source>
</reference>
<reference key="5">
    <citation type="journal article" date="2016" name="Microbiology">
        <title>Transcription factor DecR (YbaO) controls detoxification of L-cysteine in Escherichia coli.</title>
        <authorList>
            <person name="Shimada T."/>
            <person name="Tanaka K."/>
            <person name="Ishihama A."/>
        </authorList>
    </citation>
    <scope>FUNCTION</scope>
    <scope>INDUCTION BY CYSTEINE</scope>
    <scope>OPERON</scope>
    <scope>DISRUPTION PHENOTYPE</scope>
    <source>
        <strain>K12 / BW25113</strain>
    </source>
</reference>
<evidence type="ECO:0000250" key="1">
    <source>
        <dbReference type="UniProtKB" id="Q8XAF5"/>
    </source>
</evidence>
<evidence type="ECO:0000255" key="2"/>
<evidence type="ECO:0000269" key="3">
    <source>
    </source>
</evidence>
<evidence type="ECO:0000269" key="4">
    <source>
    </source>
</evidence>
<evidence type="ECO:0000269" key="5">
    <source>
    </source>
</evidence>
<evidence type="ECO:0000305" key="6"/>
<dbReference type="EMBL" id="U18997">
    <property type="protein sequence ID" value="AAA57914.1"/>
    <property type="status" value="ALT_FRAME"/>
    <property type="molecule type" value="Genomic_DNA"/>
</dbReference>
<dbReference type="EMBL" id="U00096">
    <property type="protein sequence ID" value="AAT48168.3"/>
    <property type="molecule type" value="Genomic_DNA"/>
</dbReference>
<dbReference type="EMBL" id="AP009048">
    <property type="protein sequence ID" value="BAE77159.1"/>
    <property type="status" value="ALT_INIT"/>
    <property type="molecule type" value="Genomic_DNA"/>
</dbReference>
<dbReference type="RefSeq" id="WP_000401598.1">
    <property type="nucleotide sequence ID" value="NZ_STEB01000001.1"/>
</dbReference>
<dbReference type="RefSeq" id="YP_026203.3">
    <property type="nucleotide sequence ID" value="NC_000913.3"/>
</dbReference>
<dbReference type="SMR" id="P42628"/>
<dbReference type="BioGRID" id="4259267">
    <property type="interactions" value="129"/>
</dbReference>
<dbReference type="FunCoup" id="P42628">
    <property type="interactions" value="71"/>
</dbReference>
<dbReference type="STRING" id="511145.b3110"/>
<dbReference type="TCDB" id="2.A.42.2.4">
    <property type="family name" value="the hydroxy/aromatic amino acid permease (haaap) family"/>
</dbReference>
<dbReference type="PaxDb" id="511145-b3110"/>
<dbReference type="EnsemblBacteria" id="AAT48168">
    <property type="protein sequence ID" value="AAT48168"/>
    <property type="gene ID" value="b3110"/>
</dbReference>
<dbReference type="GeneID" id="947628"/>
<dbReference type="KEGG" id="ecj:JW5519"/>
<dbReference type="KEGG" id="eco:b3110"/>
<dbReference type="KEGG" id="ecoc:C3026_16970"/>
<dbReference type="PATRIC" id="fig|1411691.4.peg.3619"/>
<dbReference type="EchoBASE" id="EB2609"/>
<dbReference type="eggNOG" id="COG0814">
    <property type="taxonomic scope" value="Bacteria"/>
</dbReference>
<dbReference type="HOGENOM" id="CLU_052043_3_0_6"/>
<dbReference type="InParanoid" id="P42628"/>
<dbReference type="OMA" id="QRGIMLF"/>
<dbReference type="OrthoDB" id="1673656at2"/>
<dbReference type="PhylomeDB" id="P42628"/>
<dbReference type="BioCyc" id="EcoCyc:YHAO-MONOMER"/>
<dbReference type="PRO" id="PR:P42628"/>
<dbReference type="Proteomes" id="UP000000625">
    <property type="component" value="Chromosome"/>
</dbReference>
<dbReference type="GO" id="GO:0005886">
    <property type="term" value="C:plasma membrane"/>
    <property type="evidence" value="ECO:0000314"/>
    <property type="project" value="EcoCyc"/>
</dbReference>
<dbReference type="GO" id="GO:0033229">
    <property type="term" value="F:cysteine transmembrane transporter activity"/>
    <property type="evidence" value="ECO:0000314"/>
    <property type="project" value="EcoCyc"/>
</dbReference>
<dbReference type="GO" id="GO:0022857">
    <property type="term" value="F:transmembrane transporter activity"/>
    <property type="evidence" value="ECO:0000318"/>
    <property type="project" value="GO_Central"/>
</dbReference>
<dbReference type="GO" id="GO:0006865">
    <property type="term" value="P:amino acid transport"/>
    <property type="evidence" value="ECO:0000318"/>
    <property type="project" value="GO_Central"/>
</dbReference>
<dbReference type="GO" id="GO:0009093">
    <property type="term" value="P:cysteine catabolic process"/>
    <property type="evidence" value="ECO:0000314"/>
    <property type="project" value="EcoCyc"/>
</dbReference>
<dbReference type="GO" id="GO:1903712">
    <property type="term" value="P:cysteine transmembrane transport"/>
    <property type="evidence" value="ECO:0000314"/>
    <property type="project" value="EcoCyc"/>
</dbReference>
<dbReference type="FunFam" id="1.20.1740.10:FF:000016">
    <property type="entry name" value="Inner membrane transporter YhaO"/>
    <property type="match status" value="1"/>
</dbReference>
<dbReference type="Gene3D" id="1.20.1740.10">
    <property type="entry name" value="Amino acid/polyamine transporter I"/>
    <property type="match status" value="1"/>
</dbReference>
<dbReference type="InterPro" id="IPR018227">
    <property type="entry name" value="Amino_acid_transport_2"/>
</dbReference>
<dbReference type="PANTHER" id="PTHR35334">
    <property type="entry name" value="SERINE TRANSPORTER"/>
    <property type="match status" value="1"/>
</dbReference>
<dbReference type="PANTHER" id="PTHR35334:SF4">
    <property type="entry name" value="SERINE TRANSPORTER-RELATED"/>
    <property type="match status" value="1"/>
</dbReference>
<feature type="chain" id="PRO_0000093817" description="Probable serine transporter">
    <location>
        <begin position="1"/>
        <end position="443"/>
    </location>
</feature>
<feature type="topological domain" description="Cytoplasmic" evidence="2">
    <location>
        <begin position="1"/>
        <end position="48"/>
    </location>
</feature>
<feature type="transmembrane region" description="Helical" evidence="2">
    <location>
        <begin position="49"/>
        <end position="69"/>
    </location>
</feature>
<feature type="topological domain" description="Periplasmic" evidence="2">
    <location>
        <begin position="70"/>
        <end position="110"/>
    </location>
</feature>
<feature type="transmembrane region" description="Helical" evidence="2">
    <location>
        <begin position="111"/>
        <end position="131"/>
    </location>
</feature>
<feature type="topological domain" description="Cytoplasmic" evidence="2">
    <location>
        <begin position="132"/>
        <end position="149"/>
    </location>
</feature>
<feature type="transmembrane region" description="Helical" evidence="2">
    <location>
        <begin position="150"/>
        <end position="170"/>
    </location>
</feature>
<feature type="topological domain" description="Periplasmic" evidence="2">
    <location>
        <begin position="171"/>
        <end position="182"/>
    </location>
</feature>
<feature type="transmembrane region" description="Helical" evidence="2">
    <location>
        <begin position="183"/>
        <end position="203"/>
    </location>
</feature>
<feature type="topological domain" description="Cytoplasmic" evidence="2">
    <location>
        <begin position="204"/>
        <end position="214"/>
    </location>
</feature>
<feature type="transmembrane region" description="Helical" evidence="2">
    <location>
        <begin position="215"/>
        <end position="235"/>
    </location>
</feature>
<feature type="topological domain" description="Periplasmic" evidence="2">
    <location>
        <begin position="236"/>
        <end position="264"/>
    </location>
</feature>
<feature type="transmembrane region" description="Helical" evidence="2">
    <location>
        <begin position="265"/>
        <end position="285"/>
    </location>
</feature>
<feature type="topological domain" description="Cytoplasmic" evidence="2">
    <location>
        <begin position="286"/>
        <end position="297"/>
    </location>
</feature>
<feature type="transmembrane region" description="Helical" evidence="2">
    <location>
        <begin position="298"/>
        <end position="318"/>
    </location>
</feature>
<feature type="transmembrane region" description="Helical" evidence="2">
    <location>
        <begin position="319"/>
        <end position="339"/>
    </location>
</feature>
<feature type="topological domain" description="Cytoplasmic" evidence="2">
    <location>
        <begin position="340"/>
        <end position="367"/>
    </location>
</feature>
<feature type="transmembrane region" description="Helical" evidence="2">
    <location>
        <begin position="368"/>
        <end position="388"/>
    </location>
</feature>
<feature type="topological domain" description="Periplasmic" evidence="2">
    <location>
        <position position="389"/>
    </location>
</feature>
<feature type="transmembrane region" description="Helical" evidence="2">
    <location>
        <begin position="390"/>
        <end position="410"/>
    </location>
</feature>
<feature type="topological domain" description="Cytoplasmic" evidence="2">
    <location>
        <begin position="411"/>
        <end position="421"/>
    </location>
</feature>
<feature type="transmembrane region" description="Helical" evidence="2">
    <location>
        <begin position="422"/>
        <end position="442"/>
    </location>
</feature>
<feature type="topological domain" description="Periplasmic" evidence="2">
    <location>
        <position position="443"/>
    </location>
</feature>
<keyword id="KW-0029">Amino-acid transport</keyword>
<keyword id="KW-0997">Cell inner membrane</keyword>
<keyword id="KW-1003">Cell membrane</keyword>
<keyword id="KW-0472">Membrane</keyword>
<keyword id="KW-1185">Reference proteome</keyword>
<keyword id="KW-0812">Transmembrane</keyword>
<keyword id="KW-1133">Transmembrane helix</keyword>
<keyword id="KW-0813">Transport</keyword>
<proteinExistence type="evidence at protein level"/>
<name>DLST_ECOLI</name>
<gene>
    <name type="primary">dlsT</name>
    <name type="synonym">yhaO</name>
    <name type="ordered locus">b3110</name>
    <name type="ordered locus">JW5519</name>
</gene>